<keyword id="KW-0027">Amidation</keyword>
<keyword id="KW-0903">Direct protein sequencing</keyword>
<keyword id="KW-0527">Neuropeptide</keyword>
<keyword id="KW-0964">Secreted</keyword>
<feature type="peptide" id="PRO_0000421591" description="Pyrokinin-2" evidence="3">
    <location>
        <begin position="1"/>
        <end position="8"/>
    </location>
</feature>
<feature type="modified residue" description="Leucine amide" evidence="3">
    <location>
        <position position="8"/>
    </location>
</feature>
<evidence type="ECO:0000250" key="1">
    <source>
        <dbReference type="UniProtKB" id="P82619"/>
    </source>
</evidence>
<evidence type="ECO:0000255" key="2"/>
<evidence type="ECO:0000269" key="3">
    <source>
    </source>
</evidence>
<evidence type="ECO:0000303" key="4">
    <source>
    </source>
</evidence>
<evidence type="ECO:0000305" key="5"/>
<evidence type="ECO:0000305" key="6">
    <source>
    </source>
</evidence>
<name>PPK2_TYRGL</name>
<dbReference type="GO" id="GO:0005576">
    <property type="term" value="C:extracellular region"/>
    <property type="evidence" value="ECO:0007669"/>
    <property type="project" value="UniProtKB-SubCell"/>
</dbReference>
<dbReference type="GO" id="GO:0007218">
    <property type="term" value="P:neuropeptide signaling pathway"/>
    <property type="evidence" value="ECO:0007669"/>
    <property type="project" value="UniProtKB-KW"/>
</dbReference>
<sequence>SPPFAPRL</sequence>
<organism>
    <name type="scientific">Tyrannophasma gladiator</name>
    <name type="common">Gladiator</name>
    <name type="synonym">Heel-walker</name>
    <dbReference type="NCBI Taxonomy" id="270861"/>
    <lineage>
        <taxon>Eukaryota</taxon>
        <taxon>Metazoa</taxon>
        <taxon>Ecdysozoa</taxon>
        <taxon>Arthropoda</taxon>
        <taxon>Hexapoda</taxon>
        <taxon>Insecta</taxon>
        <taxon>Pterygota</taxon>
        <taxon>Neoptera</taxon>
        <taxon>Polyneoptera</taxon>
        <taxon>Mantophasmatodea</taxon>
        <taxon>Mantophasmatodea incertae sedis</taxon>
        <taxon>Tyrannophasma</taxon>
    </lineage>
</organism>
<protein>
    <recommendedName>
        <fullName evidence="4">Pyrokinin-2</fullName>
        <shortName evidence="4">PK-2</shortName>
    </recommendedName>
    <alternativeName>
        <fullName evidence="1">FXPRL-amide</fullName>
    </alternativeName>
</protein>
<proteinExistence type="evidence at protein level"/>
<comment type="function">
    <text evidence="1">Myoactive.</text>
</comment>
<comment type="subcellular location">
    <subcellularLocation>
        <location evidence="6">Secreted</location>
    </subcellularLocation>
</comment>
<comment type="similarity">
    <text evidence="2">Belongs to the pyrokinin family.</text>
</comment>
<reference evidence="5" key="1">
    <citation type="journal article" date="2012" name="Syst. Biol.">
        <title>Peptidomics-based phylogeny and biogeography of Mantophasmatodea (Hexapoda).</title>
        <authorList>
            <person name="Predel R."/>
            <person name="Neupert S."/>
            <person name="Huetteroth W."/>
            <person name="Kahnt J."/>
            <person name="Waidelich D."/>
            <person name="Roth S."/>
        </authorList>
    </citation>
    <scope>PROTEIN SEQUENCE</scope>
    <scope>AMIDATION AT LEU-8</scope>
    <source>
        <tissue evidence="3">Corpora cardiaca</tissue>
    </source>
</reference>
<accession>B3A0I7</accession>